<keyword id="KW-0028">Amino-acid biosynthesis</keyword>
<keyword id="KW-0963">Cytoplasm</keyword>
<keyword id="KW-0521">NADP</keyword>
<keyword id="KW-0560">Oxidoreductase</keyword>
<keyword id="KW-0641">Proline biosynthesis</keyword>
<keyword id="KW-1185">Reference proteome</keyword>
<dbReference type="EC" id="1.2.1.41" evidence="1"/>
<dbReference type="EMBL" id="AF282880">
    <property type="protein sequence ID" value="AAK62255.1"/>
    <property type="molecule type" value="Genomic_DNA"/>
</dbReference>
<dbReference type="EMBL" id="AL591978">
    <property type="protein sequence ID" value="CAC99337.1"/>
    <property type="molecule type" value="Genomic_DNA"/>
</dbReference>
<dbReference type="PIR" id="AC1232">
    <property type="entry name" value="AC1232"/>
</dbReference>
<dbReference type="RefSeq" id="NP_464784.1">
    <property type="nucleotide sequence ID" value="NC_003210.1"/>
</dbReference>
<dbReference type="RefSeq" id="WP_009932313.1">
    <property type="nucleotide sequence ID" value="NZ_CP149495.1"/>
</dbReference>
<dbReference type="SMR" id="Q93Q55"/>
<dbReference type="STRING" id="169963.gene:17593916"/>
<dbReference type="PaxDb" id="169963-lmo1259"/>
<dbReference type="EnsemblBacteria" id="CAC99337">
    <property type="protein sequence ID" value="CAC99337"/>
    <property type="gene ID" value="CAC99337"/>
</dbReference>
<dbReference type="GeneID" id="985995"/>
<dbReference type="KEGG" id="lmo:lmo1259"/>
<dbReference type="PATRIC" id="fig|169963.11.peg.1294"/>
<dbReference type="eggNOG" id="COG0014">
    <property type="taxonomic scope" value="Bacteria"/>
</dbReference>
<dbReference type="HOGENOM" id="CLU_030231_0_0_9"/>
<dbReference type="OrthoDB" id="9809970at2"/>
<dbReference type="PhylomeDB" id="Q93Q55"/>
<dbReference type="BioCyc" id="LMON169963:LMO1259-MONOMER"/>
<dbReference type="UniPathway" id="UPA00098">
    <property type="reaction ID" value="UER00360"/>
</dbReference>
<dbReference type="Proteomes" id="UP000000817">
    <property type="component" value="Chromosome"/>
</dbReference>
<dbReference type="GO" id="GO:0005737">
    <property type="term" value="C:cytoplasm"/>
    <property type="evidence" value="ECO:0007669"/>
    <property type="project" value="UniProtKB-SubCell"/>
</dbReference>
<dbReference type="GO" id="GO:0004350">
    <property type="term" value="F:glutamate-5-semialdehyde dehydrogenase activity"/>
    <property type="evidence" value="ECO:0000318"/>
    <property type="project" value="GO_Central"/>
</dbReference>
<dbReference type="GO" id="GO:0050661">
    <property type="term" value="F:NADP binding"/>
    <property type="evidence" value="ECO:0007669"/>
    <property type="project" value="InterPro"/>
</dbReference>
<dbReference type="GO" id="GO:0055129">
    <property type="term" value="P:L-proline biosynthetic process"/>
    <property type="evidence" value="ECO:0007669"/>
    <property type="project" value="UniProtKB-UniRule"/>
</dbReference>
<dbReference type="CDD" id="cd07079">
    <property type="entry name" value="ALDH_F18-19_ProA-GPR"/>
    <property type="match status" value="1"/>
</dbReference>
<dbReference type="FunFam" id="3.40.309.10:FF:000006">
    <property type="entry name" value="Gamma-glutamyl phosphate reductase"/>
    <property type="match status" value="1"/>
</dbReference>
<dbReference type="Gene3D" id="3.40.605.10">
    <property type="entry name" value="Aldehyde Dehydrogenase, Chain A, domain 1"/>
    <property type="match status" value="1"/>
</dbReference>
<dbReference type="Gene3D" id="3.40.309.10">
    <property type="entry name" value="Aldehyde Dehydrogenase, Chain A, domain 2"/>
    <property type="match status" value="1"/>
</dbReference>
<dbReference type="HAMAP" id="MF_00412">
    <property type="entry name" value="ProA"/>
    <property type="match status" value="1"/>
</dbReference>
<dbReference type="InterPro" id="IPR016161">
    <property type="entry name" value="Ald_DH/histidinol_DH"/>
</dbReference>
<dbReference type="InterPro" id="IPR016163">
    <property type="entry name" value="Ald_DH_C"/>
</dbReference>
<dbReference type="InterPro" id="IPR016162">
    <property type="entry name" value="Ald_DH_N"/>
</dbReference>
<dbReference type="InterPro" id="IPR015590">
    <property type="entry name" value="Aldehyde_DH_dom"/>
</dbReference>
<dbReference type="InterPro" id="IPR020593">
    <property type="entry name" value="G-glutamylP_reductase_CS"/>
</dbReference>
<dbReference type="InterPro" id="IPR012134">
    <property type="entry name" value="Glu-5-SA_DH"/>
</dbReference>
<dbReference type="InterPro" id="IPR000965">
    <property type="entry name" value="GPR_dom"/>
</dbReference>
<dbReference type="NCBIfam" id="NF001221">
    <property type="entry name" value="PRK00197.1"/>
    <property type="match status" value="1"/>
</dbReference>
<dbReference type="NCBIfam" id="TIGR00407">
    <property type="entry name" value="proA"/>
    <property type="match status" value="1"/>
</dbReference>
<dbReference type="PANTHER" id="PTHR11063:SF8">
    <property type="entry name" value="DELTA-1-PYRROLINE-5-CARBOXYLATE SYNTHASE"/>
    <property type="match status" value="1"/>
</dbReference>
<dbReference type="PANTHER" id="PTHR11063">
    <property type="entry name" value="GLUTAMATE SEMIALDEHYDE DEHYDROGENASE"/>
    <property type="match status" value="1"/>
</dbReference>
<dbReference type="Pfam" id="PF00171">
    <property type="entry name" value="Aldedh"/>
    <property type="match status" value="1"/>
</dbReference>
<dbReference type="PIRSF" id="PIRSF000151">
    <property type="entry name" value="GPR"/>
    <property type="match status" value="1"/>
</dbReference>
<dbReference type="SUPFAM" id="SSF53720">
    <property type="entry name" value="ALDH-like"/>
    <property type="match status" value="1"/>
</dbReference>
<dbReference type="PROSITE" id="PS01223">
    <property type="entry name" value="PROA"/>
    <property type="match status" value="1"/>
</dbReference>
<name>PROA_LISMO</name>
<gene>
    <name evidence="1" type="primary">proA</name>
    <name type="ordered locus">lmo1259</name>
</gene>
<reference key="1">
    <citation type="journal article" date="2001" name="Appl. Environ. Microbiol.">
        <title>Identification and disruption of the proBA Locus in Listeria monocytogenes: role of proline biosynthesis in salt tolerance and murine infection.</title>
        <authorList>
            <person name="Sleator R.D."/>
            <person name="Gahan C.G.M."/>
            <person name="Hill C."/>
        </authorList>
    </citation>
    <scope>NUCLEOTIDE SEQUENCE [GENOMIC DNA]</scope>
</reference>
<reference key="2">
    <citation type="journal article" date="2001" name="Science">
        <title>Comparative genomics of Listeria species.</title>
        <authorList>
            <person name="Glaser P."/>
            <person name="Frangeul L."/>
            <person name="Buchrieser C."/>
            <person name="Rusniok C."/>
            <person name="Amend A."/>
            <person name="Baquero F."/>
            <person name="Berche P."/>
            <person name="Bloecker H."/>
            <person name="Brandt P."/>
            <person name="Chakraborty T."/>
            <person name="Charbit A."/>
            <person name="Chetouani F."/>
            <person name="Couve E."/>
            <person name="de Daruvar A."/>
            <person name="Dehoux P."/>
            <person name="Domann E."/>
            <person name="Dominguez-Bernal G."/>
            <person name="Duchaud E."/>
            <person name="Durant L."/>
            <person name="Dussurget O."/>
            <person name="Entian K.-D."/>
            <person name="Fsihi H."/>
            <person name="Garcia-del Portillo F."/>
            <person name="Garrido P."/>
            <person name="Gautier L."/>
            <person name="Goebel W."/>
            <person name="Gomez-Lopez N."/>
            <person name="Hain T."/>
            <person name="Hauf J."/>
            <person name="Jackson D."/>
            <person name="Jones L.-M."/>
            <person name="Kaerst U."/>
            <person name="Kreft J."/>
            <person name="Kuhn M."/>
            <person name="Kunst F."/>
            <person name="Kurapkat G."/>
            <person name="Madueno E."/>
            <person name="Maitournam A."/>
            <person name="Mata Vicente J."/>
            <person name="Ng E."/>
            <person name="Nedjari H."/>
            <person name="Nordsiek G."/>
            <person name="Novella S."/>
            <person name="de Pablos B."/>
            <person name="Perez-Diaz J.-C."/>
            <person name="Purcell R."/>
            <person name="Remmel B."/>
            <person name="Rose M."/>
            <person name="Schlueter T."/>
            <person name="Simoes N."/>
            <person name="Tierrez A."/>
            <person name="Vazquez-Boland J.-A."/>
            <person name="Voss H."/>
            <person name="Wehland J."/>
            <person name="Cossart P."/>
        </authorList>
    </citation>
    <scope>NUCLEOTIDE SEQUENCE [LARGE SCALE GENOMIC DNA]</scope>
    <source>
        <strain>ATCC BAA-679 / EGD-e</strain>
    </source>
</reference>
<evidence type="ECO:0000255" key="1">
    <source>
        <dbReference type="HAMAP-Rule" id="MF_00412"/>
    </source>
</evidence>
<feature type="chain" id="PRO_0000189746" description="Gamma-glutamyl phosphate reductase">
    <location>
        <begin position="1"/>
        <end position="415"/>
    </location>
</feature>
<comment type="function">
    <text evidence="1">Catalyzes the NADPH-dependent reduction of L-glutamate 5-phosphate into L-glutamate 5-semialdehyde and phosphate. The product spontaneously undergoes cyclization to form 1-pyrroline-5-carboxylate.</text>
</comment>
<comment type="catalytic activity">
    <reaction evidence="1">
        <text>L-glutamate 5-semialdehyde + phosphate + NADP(+) = L-glutamyl 5-phosphate + NADPH + H(+)</text>
        <dbReference type="Rhea" id="RHEA:19541"/>
        <dbReference type="ChEBI" id="CHEBI:15378"/>
        <dbReference type="ChEBI" id="CHEBI:43474"/>
        <dbReference type="ChEBI" id="CHEBI:57783"/>
        <dbReference type="ChEBI" id="CHEBI:58066"/>
        <dbReference type="ChEBI" id="CHEBI:58274"/>
        <dbReference type="ChEBI" id="CHEBI:58349"/>
        <dbReference type="EC" id="1.2.1.41"/>
    </reaction>
</comment>
<comment type="pathway">
    <text evidence="1">Amino-acid biosynthesis; L-proline biosynthesis; L-glutamate 5-semialdehyde from L-glutamate: step 2/2.</text>
</comment>
<comment type="subcellular location">
    <subcellularLocation>
        <location evidence="1">Cytoplasm</location>
    </subcellularLocation>
</comment>
<comment type="similarity">
    <text evidence="1">Belongs to the gamma-glutamyl phosphate reductase family.</text>
</comment>
<proteinExistence type="inferred from homology"/>
<sequence length="415" mass="45509">MTELIKKGSAAKEAAQFLAQASTKQKNAALLNLSNDLLTHTASLLEENNKDIIRAREKGTPETMIDRLRLTEERIKEISEAVKQVVALKDPIGEVTNMWKNEAELTIGKTRVPLGVIGIIYESRPNVTVDASVLCFKTGNAVILRGGSDAIDSNKALMSVIQDSLEASGFPRSSVQLIEDTSRETARDMMRLNRFLDVLIPRGGAKLIQTVLENATVPVIETGTGNCHIYVDKAAEKQMAIDILVNAKCSRPSVCNAAETLLIHRDVADAFLPEIETALKEYNVELRADERAREILKDSKAATESDWEDEFLDFILAIKVVDSVDEAINHINKYGTKHSEAIISNDYATGQAFHQKVDAAAVYINASTRFTDGFAMGFGAEIGISTQKLHARGPMGLTELTSTKYIIFGDGQIRN</sequence>
<organism>
    <name type="scientific">Listeria monocytogenes serovar 1/2a (strain ATCC BAA-679 / EGD-e)</name>
    <dbReference type="NCBI Taxonomy" id="169963"/>
    <lineage>
        <taxon>Bacteria</taxon>
        <taxon>Bacillati</taxon>
        <taxon>Bacillota</taxon>
        <taxon>Bacilli</taxon>
        <taxon>Bacillales</taxon>
        <taxon>Listeriaceae</taxon>
        <taxon>Listeria</taxon>
    </lineage>
</organism>
<protein>
    <recommendedName>
        <fullName evidence="1">Gamma-glutamyl phosphate reductase</fullName>
        <shortName evidence="1">GPR</shortName>
        <ecNumber evidence="1">1.2.1.41</ecNumber>
    </recommendedName>
    <alternativeName>
        <fullName evidence="1">Glutamate-5-semialdehyde dehydrogenase</fullName>
    </alternativeName>
    <alternativeName>
        <fullName evidence="1">Glutamyl-gamma-semialdehyde dehydrogenase</fullName>
        <shortName evidence="1">GSA dehydrogenase</shortName>
    </alternativeName>
</protein>
<accession>Q93Q55</accession>